<proteinExistence type="evidence at protein level"/>
<name>ALA6_ARATH</name>
<protein>
    <recommendedName>
        <fullName evidence="4">Phospholipid-transporting ATPase 6</fullName>
        <shortName evidence="4">AtALA6</shortName>
        <ecNumber evidence="6">7.6.2.1</ecNumber>
    </recommendedName>
    <alternativeName>
        <fullName evidence="4">Aminophospholipid flippase 6</fullName>
    </alternativeName>
</protein>
<accession>Q9SLK6</accession>
<reference key="1">
    <citation type="journal article" date="2000" name="Nature">
        <title>Sequence and analysis of chromosome 1 of the plant Arabidopsis thaliana.</title>
        <authorList>
            <person name="Theologis A."/>
            <person name="Ecker J.R."/>
            <person name="Palm C.J."/>
            <person name="Federspiel N.A."/>
            <person name="Kaul S."/>
            <person name="White O."/>
            <person name="Alonso J."/>
            <person name="Altafi H."/>
            <person name="Araujo R."/>
            <person name="Bowman C.L."/>
            <person name="Brooks S.Y."/>
            <person name="Buehler E."/>
            <person name="Chan A."/>
            <person name="Chao Q."/>
            <person name="Chen H."/>
            <person name="Cheuk R.F."/>
            <person name="Chin C.W."/>
            <person name="Chung M.K."/>
            <person name="Conn L."/>
            <person name="Conway A.B."/>
            <person name="Conway A.R."/>
            <person name="Creasy T.H."/>
            <person name="Dewar K."/>
            <person name="Dunn P."/>
            <person name="Etgu P."/>
            <person name="Feldblyum T.V."/>
            <person name="Feng J.-D."/>
            <person name="Fong B."/>
            <person name="Fujii C.Y."/>
            <person name="Gill J.E."/>
            <person name="Goldsmith A.D."/>
            <person name="Haas B."/>
            <person name="Hansen N.F."/>
            <person name="Hughes B."/>
            <person name="Huizar L."/>
            <person name="Hunter J.L."/>
            <person name="Jenkins J."/>
            <person name="Johnson-Hopson C."/>
            <person name="Khan S."/>
            <person name="Khaykin E."/>
            <person name="Kim C.J."/>
            <person name="Koo H.L."/>
            <person name="Kremenetskaia I."/>
            <person name="Kurtz D.B."/>
            <person name="Kwan A."/>
            <person name="Lam B."/>
            <person name="Langin-Hooper S."/>
            <person name="Lee A."/>
            <person name="Lee J.M."/>
            <person name="Lenz C.A."/>
            <person name="Li J.H."/>
            <person name="Li Y.-P."/>
            <person name="Lin X."/>
            <person name="Liu S.X."/>
            <person name="Liu Z.A."/>
            <person name="Luros J.S."/>
            <person name="Maiti R."/>
            <person name="Marziali A."/>
            <person name="Militscher J."/>
            <person name="Miranda M."/>
            <person name="Nguyen M."/>
            <person name="Nierman W.C."/>
            <person name="Osborne B.I."/>
            <person name="Pai G."/>
            <person name="Peterson J."/>
            <person name="Pham P.K."/>
            <person name="Rizzo M."/>
            <person name="Rooney T."/>
            <person name="Rowley D."/>
            <person name="Sakano H."/>
            <person name="Salzberg S.L."/>
            <person name="Schwartz J.R."/>
            <person name="Shinn P."/>
            <person name="Southwick A.M."/>
            <person name="Sun H."/>
            <person name="Tallon L.J."/>
            <person name="Tambunga G."/>
            <person name="Toriumi M.J."/>
            <person name="Town C.D."/>
            <person name="Utterback T."/>
            <person name="Van Aken S."/>
            <person name="Vaysberg M."/>
            <person name="Vysotskaia V.S."/>
            <person name="Walker M."/>
            <person name="Wu D."/>
            <person name="Yu G."/>
            <person name="Fraser C.M."/>
            <person name="Venter J.C."/>
            <person name="Davis R.W."/>
        </authorList>
    </citation>
    <scope>NUCLEOTIDE SEQUENCE [LARGE SCALE GENOMIC DNA]</scope>
    <source>
        <strain>cv. Columbia</strain>
    </source>
</reference>
<reference key="2">
    <citation type="journal article" date="2017" name="Plant J.">
        <title>Araport11: a complete reannotation of the Arabidopsis thaliana reference genome.</title>
        <authorList>
            <person name="Cheng C.Y."/>
            <person name="Krishnakumar V."/>
            <person name="Chan A.P."/>
            <person name="Thibaud-Nissen F."/>
            <person name="Schobel S."/>
            <person name="Town C.D."/>
        </authorList>
    </citation>
    <scope>GENOME REANNOTATION</scope>
    <source>
        <strain>cv. Columbia</strain>
    </source>
</reference>
<reference key="3">
    <citation type="journal article" date="2001" name="Plant Physiol.">
        <title>Inventory of the superfamily of P-type ion pumps in Arabidopsis.</title>
        <authorList>
            <person name="Axelsen K.B."/>
            <person name="Palmgren M.G."/>
        </authorList>
    </citation>
    <scope>GENE FAMILY</scope>
    <scope>NOMENCLATURE</scope>
</reference>
<reference key="4">
    <citation type="journal article" date="2007" name="Mol. Cell. Proteomics">
        <title>Multidimensional protein identification technology (MudPIT) analysis of ubiquitinated proteins in plants.</title>
        <authorList>
            <person name="Maor R."/>
            <person name="Jones A."/>
            <person name="Nuehse T.S."/>
            <person name="Studholme D.J."/>
            <person name="Peck S.C."/>
            <person name="Shirasu K."/>
        </authorList>
    </citation>
    <scope>UBIQUITINATION [LARGE SCALE ANALYSIS] AT LYS-625</scope>
    <scope>IDENTIFICATION BY MASS SPECTROMETRY [LARGE SCALE ANALYSIS]</scope>
    <source>
        <strain>cv. Landsberg erecta</strain>
    </source>
</reference>
<reference key="5">
    <citation type="journal article" date="2015" name="Front. Plant Sci.">
        <title>Loss of the Arabidopsis thaliana P4-ATPases ALA6 and ALA7 impairs pollen fitness and alters the pollen tube plasma membrane.</title>
        <authorList>
            <person name="McDowell S.C."/>
            <person name="Lopez-Marques R.L."/>
            <person name="Cohen T."/>
            <person name="Brown E."/>
            <person name="Rosenberg A."/>
            <person name="Palmgren M.G."/>
            <person name="Harper J.F."/>
        </authorList>
    </citation>
    <scope>SUBCELLULAR LOCATION</scope>
    <scope>DISRUPTION PHENOTYPE</scope>
</reference>
<feature type="chain" id="PRO_0000046390" description="Phospholipid-transporting ATPase 6">
    <location>
        <begin position="1"/>
        <end position="1240"/>
    </location>
</feature>
<feature type="topological domain" description="Cytoplasmic" evidence="2">
    <location>
        <begin position="1"/>
        <end position="75"/>
    </location>
</feature>
<feature type="transmembrane region" description="Helical" evidence="2">
    <location>
        <begin position="76"/>
        <end position="97"/>
    </location>
</feature>
<feature type="topological domain" description="Extracellular" evidence="2">
    <location>
        <begin position="98"/>
        <end position="101"/>
    </location>
</feature>
<feature type="transmembrane region" description="Helical" evidence="2">
    <location>
        <begin position="102"/>
        <end position="124"/>
    </location>
</feature>
<feature type="topological domain" description="Cytoplasmic" evidence="2">
    <location>
        <begin position="125"/>
        <end position="306"/>
    </location>
</feature>
<feature type="transmembrane region" description="Helical" evidence="2">
    <location>
        <begin position="307"/>
        <end position="328"/>
    </location>
</feature>
<feature type="topological domain" description="Extracellular" evidence="2">
    <location>
        <begin position="329"/>
        <end position="360"/>
    </location>
</feature>
<feature type="transmembrane region" description="Helical" evidence="2">
    <location>
        <begin position="361"/>
        <end position="378"/>
    </location>
</feature>
<feature type="topological domain" description="Cytoplasmic" evidence="2">
    <location>
        <begin position="379"/>
        <end position="943"/>
    </location>
</feature>
<feature type="transmembrane region" description="Helical" evidence="2">
    <location>
        <begin position="944"/>
        <end position="963"/>
    </location>
</feature>
<feature type="topological domain" description="Extracellular" evidence="2">
    <location>
        <begin position="964"/>
        <end position="977"/>
    </location>
</feature>
<feature type="transmembrane region" description="Helical" evidence="2">
    <location>
        <begin position="978"/>
        <end position="997"/>
    </location>
</feature>
<feature type="topological domain" description="Cytoplasmic" evidence="2">
    <location>
        <begin position="998"/>
        <end position="1027"/>
    </location>
</feature>
<feature type="transmembrane region" description="Helical" evidence="2">
    <location>
        <begin position="1028"/>
        <end position="1050"/>
    </location>
</feature>
<feature type="topological domain" description="Extracellular" evidence="2">
    <location>
        <begin position="1051"/>
        <end position="1063"/>
    </location>
</feature>
<feature type="transmembrane region" description="Helical" evidence="2">
    <location>
        <begin position="1064"/>
        <end position="1086"/>
    </location>
</feature>
<feature type="topological domain" description="Cytoplasmic" evidence="2">
    <location>
        <begin position="1087"/>
        <end position="1092"/>
    </location>
</feature>
<feature type="transmembrane region" description="Helical" evidence="2">
    <location>
        <begin position="1093"/>
        <end position="1113"/>
    </location>
</feature>
<feature type="topological domain" description="Extracellular" evidence="2">
    <location>
        <begin position="1114"/>
        <end position="1130"/>
    </location>
</feature>
<feature type="transmembrane region" description="Helical" evidence="2">
    <location>
        <begin position="1131"/>
        <end position="1155"/>
    </location>
</feature>
<feature type="topological domain" description="Cytoplasmic" evidence="2">
    <location>
        <begin position="1156"/>
        <end position="1240"/>
    </location>
</feature>
<feature type="active site" description="4-aspartylphosphate intermediate" evidence="1">
    <location>
        <position position="426"/>
    </location>
</feature>
<feature type="binding site" evidence="1">
    <location>
        <position position="888"/>
    </location>
    <ligand>
        <name>Mg(2+)</name>
        <dbReference type="ChEBI" id="CHEBI:18420"/>
    </ligand>
</feature>
<feature type="binding site" evidence="1">
    <location>
        <position position="892"/>
    </location>
    <ligand>
        <name>Mg(2+)</name>
        <dbReference type="ChEBI" id="CHEBI:18420"/>
    </ligand>
</feature>
<feature type="cross-link" description="Glycyl lysine isopeptide (Lys-Gly) (interchain with G-Cter in ubiquitin)" evidence="10">
    <location>
        <position position="625"/>
    </location>
</feature>
<evidence type="ECO:0000250" key="1"/>
<evidence type="ECO:0000255" key="2"/>
<evidence type="ECO:0000269" key="3">
    <source>
    </source>
</evidence>
<evidence type="ECO:0000303" key="4">
    <source>
    </source>
</evidence>
<evidence type="ECO:0000305" key="5"/>
<evidence type="ECO:0000305" key="6">
    <source>
    </source>
</evidence>
<evidence type="ECO:0000305" key="7">
    <source>
    </source>
</evidence>
<evidence type="ECO:0000312" key="8">
    <source>
        <dbReference type="Araport" id="AT1G54280"/>
    </source>
</evidence>
<evidence type="ECO:0000312" key="9">
    <source>
        <dbReference type="EMBL" id="AAD25608.2"/>
    </source>
</evidence>
<evidence type="ECO:0007744" key="10">
    <source>
    </source>
</evidence>
<keyword id="KW-0067">ATP-binding</keyword>
<keyword id="KW-1003">Cell membrane</keyword>
<keyword id="KW-1017">Isopeptide bond</keyword>
<keyword id="KW-0460">Magnesium</keyword>
<keyword id="KW-0472">Membrane</keyword>
<keyword id="KW-0479">Metal-binding</keyword>
<keyword id="KW-0547">Nucleotide-binding</keyword>
<keyword id="KW-1185">Reference proteome</keyword>
<keyword id="KW-1278">Translocase</keyword>
<keyword id="KW-0812">Transmembrane</keyword>
<keyword id="KW-1133">Transmembrane helix</keyword>
<keyword id="KW-0832">Ubl conjugation</keyword>
<sequence length="1240" mass="140102">MARRRIRSRIRKSHFYTFRCLRPKTLDDQGPHVINGPGYTRIVHCNQPHLHLATKLIRYRSNYVSTTRYNLLTFLPKCLYEQFHRVANFYFLVAAILSVFPLSPFNKWSMIAPLVFVVGLSMGKEALEDWRRFMQDVEVNSRKASVHKGSGDFGRRTWKRIRVGDIVRVEKDEFFPADLLLLSSSYEDGICYVETMNLDGETNLKVKRCLDATLALEKDESFQNFSGTIKCEDPNPNLYTFVGNLECDGQVYPLDPNQILLRDSKLRNTAYVYGVVVFTGHDTKVMQNSTKSPSKRSRIEKRMDYIIYTLFALLLTVSFISSLGFAVMTKLLMAEWWYLRPDKPESLTNPTNPLYAWVVHLITALLLYGYLIPISLYVSIEVVKVLQAHFINQDLQLYDSESGTPAQARTSNLNEELGQVDTILSDKTGTLTCNQMDFLKCSIAGTSYGVRASEVELAAAKQMAMDLEEKGEEVANLSMNKGRTQRYAKLASKTSSDFELETVVTASDEKDQKQNTGVKGFSFEDNRLMNENWLNEPNSDDILMFFRILAVCHTAIPEVDEDTGMCTYEAESPDEVAFLVASREFGFEFTKRTQSSVFIAERFSSSGQPVDREYKILNLLDFTSKRKRMSAIVRDEEGQILLLCKGADSIIFERLSKSGKEYLGATSKHLNVYGEAGLRTLALGYRKLDETEYAAWNSEFHKAKTSVGADRDEMLEKVSDMMEKELILVGATAVEDKLQKGVPQCIDNLAQAGLKIWVLTGDKMETAINIGYACSLLRQGMKQISISLTNVEESSQNSEAAAKESILMQITNASQMIKIEKDPHAAFALIIDGKTLTYALKDDVKYQFLALAVDCASVICCRVSPKQKALVTRLAKEGTGKTTLAIGDGANDVGMIQEADIGVGISGVEGMQAVMASDFSIAQFRFLERLLVVHGHWCYKRIAQMICYFFYKNITFGLTLFYFECFTGFSGQSIYNDSYLLLFNVVLTSLPVISLGVFEQDVPSDVCLQFPALYQQGPKNLFFDWYRILGWMGNGVYASIVIFTLNLGIFHVQSFRSDGQTADMNAMGTAMFTCIIWAVNVQIALTMSHFTWIQHVMIWGSIGAWYVFLALYGMLPVKLSGNIFHMLVEILAPAPIFWLTSLLVIAATTLPYLFHISYQRSVNPLDHHIIQEIKHFRIDVEDERMWKREKSKAREKTKIGFTARVDAKIRQLRGRLQRKHSVLSVMSGTSSNDTPSSNSQ</sequence>
<organism>
    <name type="scientific">Arabidopsis thaliana</name>
    <name type="common">Mouse-ear cress</name>
    <dbReference type="NCBI Taxonomy" id="3702"/>
    <lineage>
        <taxon>Eukaryota</taxon>
        <taxon>Viridiplantae</taxon>
        <taxon>Streptophyta</taxon>
        <taxon>Embryophyta</taxon>
        <taxon>Tracheophyta</taxon>
        <taxon>Spermatophyta</taxon>
        <taxon>Magnoliopsida</taxon>
        <taxon>eudicotyledons</taxon>
        <taxon>Gunneridae</taxon>
        <taxon>Pentapetalae</taxon>
        <taxon>rosids</taxon>
        <taxon>malvids</taxon>
        <taxon>Brassicales</taxon>
        <taxon>Brassicaceae</taxon>
        <taxon>Camelineae</taxon>
        <taxon>Arabidopsis</taxon>
    </lineage>
</organism>
<comment type="function">
    <text evidence="7">Involved in transport of phospholipids and in regulation of pollen plasma membrane lipid asymmetry.</text>
</comment>
<comment type="catalytic activity">
    <reaction evidence="6">
        <text>ATP + H2O + phospholipidSide 1 = ADP + phosphate + phospholipidSide 2.</text>
        <dbReference type="EC" id="7.6.2.1"/>
    </reaction>
</comment>
<comment type="subcellular location">
    <subcellularLocation>
        <location evidence="3">Cell membrane</location>
        <topology evidence="2">Multi-pass membrane protein</topology>
    </subcellularLocation>
    <subcellularLocation>
        <location evidence="3">Endomembrane system</location>
        <topology evidence="2">Multi-pass membrane protein</topology>
    </subcellularLocation>
</comment>
<comment type="disruption phenotype">
    <text evidence="3">Ala6 and ala7 double mutants are hypersensitive to temperature stress and are impaired in pollen fitness with an altered lipid composition and short and slow pollen tubes.</text>
</comment>
<comment type="similarity">
    <text evidence="5">Belongs to the cation transport ATPase (P-type) (TC 3.A.3) family. Type IV subfamily.</text>
</comment>
<comment type="sequence caution" evidence="5">
    <conflict type="erroneous gene model prediction">
        <sequence resource="EMBL-CDS" id="AAD25608"/>
    </conflict>
</comment>
<dbReference type="EC" id="7.6.2.1" evidence="6"/>
<dbReference type="EMBL" id="AC005287">
    <property type="protein sequence ID" value="AAD25608.2"/>
    <property type="status" value="ALT_SEQ"/>
    <property type="molecule type" value="Genomic_DNA"/>
</dbReference>
<dbReference type="EMBL" id="CP002684">
    <property type="protein sequence ID" value="AEE33075.1"/>
    <property type="molecule type" value="Genomic_DNA"/>
</dbReference>
<dbReference type="EMBL" id="CP002684">
    <property type="protein sequence ID" value="ANM60104.1"/>
    <property type="molecule type" value="Genomic_DNA"/>
</dbReference>
<dbReference type="EMBL" id="CP002684">
    <property type="protein sequence ID" value="ANM60105.1"/>
    <property type="molecule type" value="Genomic_DNA"/>
</dbReference>
<dbReference type="PIR" id="C96584">
    <property type="entry name" value="C96584"/>
</dbReference>
<dbReference type="RefSeq" id="NP_001319223.1">
    <property type="nucleotide sequence ID" value="NM_001333639.1"/>
</dbReference>
<dbReference type="RefSeq" id="NP_001322413.1">
    <property type="nucleotide sequence ID" value="NM_001333640.1"/>
</dbReference>
<dbReference type="RefSeq" id="NP_175830.1">
    <property type="nucleotide sequence ID" value="NM_104306.3"/>
</dbReference>
<dbReference type="SMR" id="Q9SLK6"/>
<dbReference type="FunCoup" id="Q9SLK6">
    <property type="interactions" value="646"/>
</dbReference>
<dbReference type="STRING" id="3702.Q9SLK6"/>
<dbReference type="GlyGen" id="Q9SLK6">
    <property type="glycosylation" value="1 site"/>
</dbReference>
<dbReference type="iPTMnet" id="Q9SLK6"/>
<dbReference type="PaxDb" id="3702-AT1G54280.1"/>
<dbReference type="ProteomicsDB" id="244900"/>
<dbReference type="EnsemblPlants" id="AT1G54280.1">
    <property type="protein sequence ID" value="AT1G54280.1"/>
    <property type="gene ID" value="AT1G54280"/>
</dbReference>
<dbReference type="EnsemblPlants" id="AT1G54280.2">
    <property type="protein sequence ID" value="AT1G54280.2"/>
    <property type="gene ID" value="AT1G54280"/>
</dbReference>
<dbReference type="EnsemblPlants" id="AT1G54280.3">
    <property type="protein sequence ID" value="AT1G54280.3"/>
    <property type="gene ID" value="AT1G54280"/>
</dbReference>
<dbReference type="GeneID" id="841869"/>
<dbReference type="Gramene" id="AT1G54280.1">
    <property type="protein sequence ID" value="AT1G54280.1"/>
    <property type="gene ID" value="AT1G54280"/>
</dbReference>
<dbReference type="Gramene" id="AT1G54280.2">
    <property type="protein sequence ID" value="AT1G54280.2"/>
    <property type="gene ID" value="AT1G54280"/>
</dbReference>
<dbReference type="Gramene" id="AT1G54280.3">
    <property type="protein sequence ID" value="AT1G54280.3"/>
    <property type="gene ID" value="AT1G54280"/>
</dbReference>
<dbReference type="KEGG" id="ath:AT1G54280"/>
<dbReference type="Araport" id="AT1G54280"/>
<dbReference type="TAIR" id="AT1G54280">
    <property type="gene designation" value="ALA6"/>
</dbReference>
<dbReference type="eggNOG" id="KOG0206">
    <property type="taxonomic scope" value="Eukaryota"/>
</dbReference>
<dbReference type="HOGENOM" id="CLU_000846_5_2_1"/>
<dbReference type="InParanoid" id="Q9SLK6"/>
<dbReference type="OMA" id="DILMFFR"/>
<dbReference type="OrthoDB" id="377733at2759"/>
<dbReference type="PhylomeDB" id="Q9SLK6"/>
<dbReference type="BioCyc" id="ARA:AT1G54280-MONOMER"/>
<dbReference type="PRO" id="PR:Q9SLK6"/>
<dbReference type="Proteomes" id="UP000006548">
    <property type="component" value="Chromosome 1"/>
</dbReference>
<dbReference type="ExpressionAtlas" id="Q9SLK6">
    <property type="expression patterns" value="baseline and differential"/>
</dbReference>
<dbReference type="GO" id="GO:0012505">
    <property type="term" value="C:endomembrane system"/>
    <property type="evidence" value="ECO:0000314"/>
    <property type="project" value="TAIR"/>
</dbReference>
<dbReference type="GO" id="GO:0005886">
    <property type="term" value="C:plasma membrane"/>
    <property type="evidence" value="ECO:0000314"/>
    <property type="project" value="TAIR"/>
</dbReference>
<dbReference type="GO" id="GO:0005524">
    <property type="term" value="F:ATP binding"/>
    <property type="evidence" value="ECO:0007669"/>
    <property type="project" value="UniProtKB-KW"/>
</dbReference>
<dbReference type="GO" id="GO:0016887">
    <property type="term" value="F:ATP hydrolysis activity"/>
    <property type="evidence" value="ECO:0007669"/>
    <property type="project" value="InterPro"/>
</dbReference>
<dbReference type="GO" id="GO:0140326">
    <property type="term" value="F:ATPase-coupled intramembrane lipid transporter activity"/>
    <property type="evidence" value="ECO:0007669"/>
    <property type="project" value="UniProtKB-EC"/>
</dbReference>
<dbReference type="GO" id="GO:0000287">
    <property type="term" value="F:magnesium ion binding"/>
    <property type="evidence" value="ECO:0007669"/>
    <property type="project" value="InterPro"/>
</dbReference>
<dbReference type="GO" id="GO:0008270">
    <property type="term" value="F:zinc ion binding"/>
    <property type="evidence" value="ECO:0007005"/>
    <property type="project" value="TAIR"/>
</dbReference>
<dbReference type="GO" id="GO:0010286">
    <property type="term" value="P:heat acclimation"/>
    <property type="evidence" value="ECO:0000315"/>
    <property type="project" value="TAIR"/>
</dbReference>
<dbReference type="GO" id="GO:0015914">
    <property type="term" value="P:phospholipid transport"/>
    <property type="evidence" value="ECO:0007669"/>
    <property type="project" value="InterPro"/>
</dbReference>
<dbReference type="GO" id="GO:0009860">
    <property type="term" value="P:pollen tube growth"/>
    <property type="evidence" value="ECO:0000316"/>
    <property type="project" value="TAIR"/>
</dbReference>
<dbReference type="GO" id="GO:1905038">
    <property type="term" value="P:regulation of membrane lipid metabolic process"/>
    <property type="evidence" value="ECO:0000316"/>
    <property type="project" value="TAIR"/>
</dbReference>
<dbReference type="CDD" id="cd02073">
    <property type="entry name" value="P-type_ATPase_APLT_Dnf-like"/>
    <property type="match status" value="1"/>
</dbReference>
<dbReference type="FunFam" id="2.70.150.10:FF:000023">
    <property type="entry name" value="Phospholipid-transporting ATPase"/>
    <property type="match status" value="1"/>
</dbReference>
<dbReference type="FunFam" id="3.40.1110.10:FF:000050">
    <property type="entry name" value="Phospholipid-transporting ATPase"/>
    <property type="match status" value="1"/>
</dbReference>
<dbReference type="FunFam" id="3.40.50.1000:FF:000014">
    <property type="entry name" value="Phospholipid-transporting ATPase"/>
    <property type="match status" value="1"/>
</dbReference>
<dbReference type="Gene3D" id="3.40.1110.10">
    <property type="entry name" value="Calcium-transporting ATPase, cytoplasmic domain N"/>
    <property type="match status" value="1"/>
</dbReference>
<dbReference type="Gene3D" id="2.70.150.10">
    <property type="entry name" value="Calcium-transporting ATPase, cytoplasmic transduction domain A"/>
    <property type="match status" value="1"/>
</dbReference>
<dbReference type="Gene3D" id="3.40.50.1000">
    <property type="entry name" value="HAD superfamily/HAD-like"/>
    <property type="match status" value="1"/>
</dbReference>
<dbReference type="InterPro" id="IPR023299">
    <property type="entry name" value="ATPase_P-typ_cyto_dom_N"/>
</dbReference>
<dbReference type="InterPro" id="IPR018303">
    <property type="entry name" value="ATPase_P-typ_P_site"/>
</dbReference>
<dbReference type="InterPro" id="IPR023298">
    <property type="entry name" value="ATPase_P-typ_TM_dom_sf"/>
</dbReference>
<dbReference type="InterPro" id="IPR008250">
    <property type="entry name" value="ATPase_P-typ_transduc_dom_A_sf"/>
</dbReference>
<dbReference type="InterPro" id="IPR036412">
    <property type="entry name" value="HAD-like_sf"/>
</dbReference>
<dbReference type="InterPro" id="IPR023214">
    <property type="entry name" value="HAD_sf"/>
</dbReference>
<dbReference type="InterPro" id="IPR006539">
    <property type="entry name" value="P-type_ATPase_IV"/>
</dbReference>
<dbReference type="InterPro" id="IPR032631">
    <property type="entry name" value="P-type_ATPase_N"/>
</dbReference>
<dbReference type="InterPro" id="IPR001757">
    <property type="entry name" value="P_typ_ATPase"/>
</dbReference>
<dbReference type="InterPro" id="IPR032630">
    <property type="entry name" value="P_typ_ATPase_c"/>
</dbReference>
<dbReference type="InterPro" id="IPR044492">
    <property type="entry name" value="P_typ_ATPase_HD_dom"/>
</dbReference>
<dbReference type="NCBIfam" id="TIGR01652">
    <property type="entry name" value="ATPase-Plipid"/>
    <property type="match status" value="1"/>
</dbReference>
<dbReference type="NCBIfam" id="TIGR01494">
    <property type="entry name" value="ATPase_P-type"/>
    <property type="match status" value="2"/>
</dbReference>
<dbReference type="PANTHER" id="PTHR24092:SF149">
    <property type="entry name" value="PHOSPHOLIPID-TRANSPORTING ATPASE 6"/>
    <property type="match status" value="1"/>
</dbReference>
<dbReference type="PANTHER" id="PTHR24092">
    <property type="entry name" value="PROBABLE PHOSPHOLIPID-TRANSPORTING ATPASE"/>
    <property type="match status" value="1"/>
</dbReference>
<dbReference type="Pfam" id="PF13246">
    <property type="entry name" value="Cation_ATPase"/>
    <property type="match status" value="1"/>
</dbReference>
<dbReference type="Pfam" id="PF16212">
    <property type="entry name" value="PhoLip_ATPase_C"/>
    <property type="match status" value="1"/>
</dbReference>
<dbReference type="Pfam" id="PF16209">
    <property type="entry name" value="PhoLip_ATPase_N"/>
    <property type="match status" value="1"/>
</dbReference>
<dbReference type="PRINTS" id="PR00119">
    <property type="entry name" value="CATATPASE"/>
</dbReference>
<dbReference type="SFLD" id="SFLDG00002">
    <property type="entry name" value="C1.7:_P-type_atpase_like"/>
    <property type="match status" value="1"/>
</dbReference>
<dbReference type="SFLD" id="SFLDF00027">
    <property type="entry name" value="p-type_atpase"/>
    <property type="match status" value="1"/>
</dbReference>
<dbReference type="SUPFAM" id="SSF81653">
    <property type="entry name" value="Calcium ATPase, transduction domain A"/>
    <property type="match status" value="1"/>
</dbReference>
<dbReference type="SUPFAM" id="SSF81665">
    <property type="entry name" value="Calcium ATPase, transmembrane domain M"/>
    <property type="match status" value="1"/>
</dbReference>
<dbReference type="SUPFAM" id="SSF56784">
    <property type="entry name" value="HAD-like"/>
    <property type="match status" value="1"/>
</dbReference>
<dbReference type="SUPFAM" id="SSF81660">
    <property type="entry name" value="Metal cation-transporting ATPase, ATP-binding domain N"/>
    <property type="match status" value="1"/>
</dbReference>
<dbReference type="PROSITE" id="PS00154">
    <property type="entry name" value="ATPASE_E1_E2"/>
    <property type="match status" value="1"/>
</dbReference>
<gene>
    <name evidence="4" type="primary">ALA6</name>
    <name evidence="8" type="ordered locus">At1g54280</name>
    <name evidence="9" type="ORF">F20D21.10</name>
</gene>